<dbReference type="EMBL" id="AP005672">
    <property type="protein sequence ID" value="BAC85062.1"/>
    <property type="molecule type" value="Genomic_DNA"/>
</dbReference>
<dbReference type="RefSeq" id="NP_904212.1">
    <property type="nucleotide sequence ID" value="NC_005087.2"/>
</dbReference>
<dbReference type="RefSeq" id="YP_009477542.1">
    <property type="nucleotide sequence ID" value="NC_037465.1"/>
</dbReference>
<dbReference type="SMR" id="Q6YXN4"/>
<dbReference type="FunCoup" id="Q6YXN4">
    <property type="interactions" value="60"/>
</dbReference>
<dbReference type="STRING" id="3218.Q6YXN4"/>
<dbReference type="GeneID" id="2546783"/>
<dbReference type="GeneID" id="36487173"/>
<dbReference type="KEGG" id="ppp:2546783"/>
<dbReference type="InParanoid" id="Q6YXN4"/>
<dbReference type="OrthoDB" id="1868502at2759"/>
<dbReference type="Proteomes" id="UP000006727">
    <property type="component" value="Chloroplast"/>
</dbReference>
<dbReference type="GO" id="GO:0009535">
    <property type="term" value="C:chloroplast thylakoid membrane"/>
    <property type="evidence" value="ECO:0007669"/>
    <property type="project" value="UniProtKB-SubCell"/>
</dbReference>
<dbReference type="GO" id="GO:0009539">
    <property type="term" value="C:photosystem II reaction center"/>
    <property type="evidence" value="ECO:0007669"/>
    <property type="project" value="InterPro"/>
</dbReference>
<dbReference type="GO" id="GO:0015979">
    <property type="term" value="P:photosynthesis"/>
    <property type="evidence" value="ECO:0007669"/>
    <property type="project" value="UniProtKB-UniRule"/>
</dbReference>
<dbReference type="HAMAP" id="MF_00441">
    <property type="entry name" value="PSII_PsbK"/>
    <property type="match status" value="1"/>
</dbReference>
<dbReference type="InterPro" id="IPR003687">
    <property type="entry name" value="PSII_PsbK"/>
</dbReference>
<dbReference type="InterPro" id="IPR037270">
    <property type="entry name" value="PSII_PsbK_sf"/>
</dbReference>
<dbReference type="NCBIfam" id="NF002715">
    <property type="entry name" value="PRK02553.1"/>
    <property type="match status" value="1"/>
</dbReference>
<dbReference type="PANTHER" id="PTHR35325">
    <property type="match status" value="1"/>
</dbReference>
<dbReference type="PANTHER" id="PTHR35325:SF1">
    <property type="entry name" value="PHOTOSYSTEM II REACTION CENTER PROTEIN K"/>
    <property type="match status" value="1"/>
</dbReference>
<dbReference type="Pfam" id="PF02533">
    <property type="entry name" value="PsbK"/>
    <property type="match status" value="1"/>
</dbReference>
<dbReference type="SUPFAM" id="SSF161037">
    <property type="entry name" value="Photosystem II reaction center protein K, PsbK"/>
    <property type="match status" value="1"/>
</dbReference>
<reference key="1">
    <citation type="journal article" date="2003" name="Nucleic Acids Res.">
        <title>Complete chloroplast DNA sequence of the moss Physcomitrella patens: evidence for the loss and relocation of rpoA from the chloroplast to the nucleus.</title>
        <authorList>
            <person name="Sugiura C."/>
            <person name="Kobayashi Y."/>
            <person name="Setsuyuki A."/>
            <person name="Sugita C."/>
            <person name="Sugita M."/>
        </authorList>
    </citation>
    <scope>NUCLEOTIDE SEQUENCE [LARGE SCALE GENOMIC DNA]</scope>
    <source>
        <strain>cv. Gransden 2004</strain>
    </source>
</reference>
<sequence>MLAIFNIYLDNAFHLNGIILAKLPEAYAIFDPIVDVMPIIPVFFFLLAFVWQASVSFR</sequence>
<gene>
    <name evidence="1" type="primary">psbK</name>
</gene>
<evidence type="ECO:0000255" key="1">
    <source>
        <dbReference type="HAMAP-Rule" id="MF_00441"/>
    </source>
</evidence>
<organism>
    <name type="scientific">Physcomitrium patens</name>
    <name type="common">Spreading-leaved earth moss</name>
    <name type="synonym">Physcomitrella patens</name>
    <dbReference type="NCBI Taxonomy" id="3218"/>
    <lineage>
        <taxon>Eukaryota</taxon>
        <taxon>Viridiplantae</taxon>
        <taxon>Streptophyta</taxon>
        <taxon>Embryophyta</taxon>
        <taxon>Bryophyta</taxon>
        <taxon>Bryophytina</taxon>
        <taxon>Bryopsida</taxon>
        <taxon>Funariidae</taxon>
        <taxon>Funariales</taxon>
        <taxon>Funariaceae</taxon>
        <taxon>Physcomitrium</taxon>
    </lineage>
</organism>
<proteinExistence type="inferred from homology"/>
<feature type="propeptide" id="PRO_0000029509" evidence="1">
    <location>
        <begin position="1"/>
        <end position="21"/>
    </location>
</feature>
<feature type="chain" id="PRO_0000029510" description="Photosystem II reaction center protein K" evidence="1">
    <location>
        <begin position="22"/>
        <end position="58"/>
    </location>
</feature>
<feature type="transmembrane region" description="Helical" evidence="1">
    <location>
        <begin position="29"/>
        <end position="49"/>
    </location>
</feature>
<comment type="function">
    <text evidence="1">One of the components of the core complex of photosystem II (PSII). PSII is a light-driven water:plastoquinone oxidoreductase that uses light energy to abstract electrons from H(2)O, generating O(2) and a proton gradient subsequently used for ATP formation. It consists of a core antenna complex that captures photons, and an electron transfer chain that converts photonic excitation into a charge separation.</text>
</comment>
<comment type="subunit">
    <text evidence="1">PSII is composed of 1 copy each of membrane proteins PsbA, PsbB, PsbC, PsbD, PsbE, PsbF, PsbH, PsbI, PsbJ, PsbK, PsbL, PsbM, PsbT, PsbX, PsbY, PsbZ, Psb30/Ycf12, at least 3 peripheral proteins of the oxygen-evolving complex and a large number of cofactors. It forms dimeric complexes.</text>
</comment>
<comment type="subcellular location">
    <subcellularLocation>
        <location evidence="1">Plastid</location>
        <location evidence="1">Chloroplast thylakoid membrane</location>
        <topology evidence="1">Single-pass membrane protein</topology>
    </subcellularLocation>
</comment>
<comment type="similarity">
    <text evidence="1">Belongs to the PsbK family.</text>
</comment>
<keyword id="KW-0150">Chloroplast</keyword>
<keyword id="KW-0472">Membrane</keyword>
<keyword id="KW-0602">Photosynthesis</keyword>
<keyword id="KW-0604">Photosystem II</keyword>
<keyword id="KW-0934">Plastid</keyword>
<keyword id="KW-0674">Reaction center</keyword>
<keyword id="KW-1185">Reference proteome</keyword>
<keyword id="KW-0793">Thylakoid</keyword>
<keyword id="KW-0812">Transmembrane</keyword>
<keyword id="KW-1133">Transmembrane helix</keyword>
<name>PSBK_PHYPA</name>
<accession>Q6YXN4</accession>
<geneLocation type="chloroplast"/>
<protein>
    <recommendedName>
        <fullName evidence="1">Photosystem II reaction center protein K</fullName>
        <shortName evidence="1">PSII-K</shortName>
    </recommendedName>
</protein>